<keyword id="KW-0963">Cytoplasm</keyword>
<keyword id="KW-0489">Methyltransferase</keyword>
<keyword id="KW-0698">rRNA processing</keyword>
<keyword id="KW-0949">S-adenosyl-L-methionine</keyword>
<keyword id="KW-0808">Transferase</keyword>
<protein>
    <recommendedName>
        <fullName evidence="1">Ribosomal RNA small subunit methyltransferase J</fullName>
        <ecNumber evidence="1">2.1.1.242</ecNumber>
    </recommendedName>
    <alternativeName>
        <fullName evidence="1">16S rRNA m2G1516 methyltransferase</fullName>
    </alternativeName>
    <alternativeName>
        <fullName evidence="1">rRNA (guanine-N(2)-)-methyltransferase</fullName>
    </alternativeName>
</protein>
<evidence type="ECO:0000255" key="1">
    <source>
        <dbReference type="HAMAP-Rule" id="MF_01523"/>
    </source>
</evidence>
<comment type="function">
    <text evidence="1">Specifically methylates the guanosine in position 1516 of 16S rRNA.</text>
</comment>
<comment type="catalytic activity">
    <reaction evidence="1">
        <text>guanosine(1516) in 16S rRNA + S-adenosyl-L-methionine = N(2)-methylguanosine(1516) in 16S rRNA + S-adenosyl-L-homocysteine + H(+)</text>
        <dbReference type="Rhea" id="RHEA:43220"/>
        <dbReference type="Rhea" id="RHEA-COMP:10412"/>
        <dbReference type="Rhea" id="RHEA-COMP:10413"/>
        <dbReference type="ChEBI" id="CHEBI:15378"/>
        <dbReference type="ChEBI" id="CHEBI:57856"/>
        <dbReference type="ChEBI" id="CHEBI:59789"/>
        <dbReference type="ChEBI" id="CHEBI:74269"/>
        <dbReference type="ChEBI" id="CHEBI:74481"/>
        <dbReference type="EC" id="2.1.1.242"/>
    </reaction>
</comment>
<comment type="subcellular location">
    <subcellularLocation>
        <location evidence="1">Cytoplasm</location>
    </subcellularLocation>
</comment>
<comment type="similarity">
    <text evidence="1">Belongs to the methyltransferase superfamily. RsmJ family.</text>
</comment>
<proteinExistence type="inferred from homology"/>
<name>RSMJ_ACIBS</name>
<accession>B0VUQ6</accession>
<sequence>MEKNCGSGQSKLKALRMHIYFEVDFQEQAQHYQAVLHSRGVTVDLQPIEKLNARFLRLNPDLALCVDENGLWLSANGMKMQPDWKAEIPRLKRASLKSEMIARACQLGEKPVLVDATAGLGHDSLLMAYLGAQIQLVERHPILFTLLEDSKAQAQRDPFLSQFMDRIQLIFADSASYLKQLDQEEKTVDVVYLDPMFPQRDQNQQAIKKQAQVKKQMQLLHLLLPEDGEMDLGGHLLELAKKVAKRVIVKRPRHAIFLANQEPAHQWQGDACRFDAYFQ</sequence>
<dbReference type="EC" id="2.1.1.242" evidence="1"/>
<dbReference type="EMBL" id="CU468230">
    <property type="protein sequence ID" value="CAP02118.1"/>
    <property type="molecule type" value="Genomic_DNA"/>
</dbReference>
<dbReference type="SMR" id="B0VUQ6"/>
<dbReference type="KEGG" id="abm:ABSDF2822"/>
<dbReference type="HOGENOM" id="CLU_076324_1_0_6"/>
<dbReference type="Proteomes" id="UP000001741">
    <property type="component" value="Chromosome"/>
</dbReference>
<dbReference type="GO" id="GO:0005737">
    <property type="term" value="C:cytoplasm"/>
    <property type="evidence" value="ECO:0007669"/>
    <property type="project" value="UniProtKB-SubCell"/>
</dbReference>
<dbReference type="GO" id="GO:0008990">
    <property type="term" value="F:rRNA (guanine-N2-)-methyltransferase activity"/>
    <property type="evidence" value="ECO:0007669"/>
    <property type="project" value="UniProtKB-UniRule"/>
</dbReference>
<dbReference type="CDD" id="cd02440">
    <property type="entry name" value="AdoMet_MTases"/>
    <property type="match status" value="1"/>
</dbReference>
<dbReference type="Gene3D" id="3.40.50.150">
    <property type="entry name" value="Vaccinia Virus protein VP39"/>
    <property type="match status" value="1"/>
</dbReference>
<dbReference type="HAMAP" id="MF_01523">
    <property type="entry name" value="16SrRNA_methyltr_J"/>
    <property type="match status" value="1"/>
</dbReference>
<dbReference type="InterPro" id="IPR007536">
    <property type="entry name" value="16SrRNA_methylTrfase_J"/>
</dbReference>
<dbReference type="InterPro" id="IPR029063">
    <property type="entry name" value="SAM-dependent_MTases_sf"/>
</dbReference>
<dbReference type="PANTHER" id="PTHR36112">
    <property type="entry name" value="RIBOSOMAL RNA SMALL SUBUNIT METHYLTRANSFERASE J"/>
    <property type="match status" value="1"/>
</dbReference>
<dbReference type="PANTHER" id="PTHR36112:SF1">
    <property type="entry name" value="RIBOSOMAL RNA SMALL SUBUNIT METHYLTRANSFERASE J"/>
    <property type="match status" value="1"/>
</dbReference>
<dbReference type="Pfam" id="PF04445">
    <property type="entry name" value="SAM_MT"/>
    <property type="match status" value="1"/>
</dbReference>
<dbReference type="SUPFAM" id="SSF53335">
    <property type="entry name" value="S-adenosyl-L-methionine-dependent methyltransferases"/>
    <property type="match status" value="1"/>
</dbReference>
<feature type="chain" id="PRO_0000383370" description="Ribosomal RNA small subunit methyltransferase J">
    <location>
        <begin position="1"/>
        <end position="279"/>
    </location>
</feature>
<feature type="binding site" evidence="1">
    <location>
        <begin position="138"/>
        <end position="139"/>
    </location>
    <ligand>
        <name>S-adenosyl-L-methionine</name>
        <dbReference type="ChEBI" id="CHEBI:59789"/>
    </ligand>
</feature>
<feature type="binding site" evidence="1">
    <location>
        <position position="194"/>
    </location>
    <ligand>
        <name>S-adenosyl-L-methionine</name>
        <dbReference type="ChEBI" id="CHEBI:59789"/>
    </ligand>
</feature>
<gene>
    <name evidence="1" type="primary">rsmJ</name>
    <name type="ordered locus">ABSDF2822</name>
</gene>
<organism>
    <name type="scientific">Acinetobacter baumannii (strain SDF)</name>
    <dbReference type="NCBI Taxonomy" id="509170"/>
    <lineage>
        <taxon>Bacteria</taxon>
        <taxon>Pseudomonadati</taxon>
        <taxon>Pseudomonadota</taxon>
        <taxon>Gammaproteobacteria</taxon>
        <taxon>Moraxellales</taxon>
        <taxon>Moraxellaceae</taxon>
        <taxon>Acinetobacter</taxon>
        <taxon>Acinetobacter calcoaceticus/baumannii complex</taxon>
    </lineage>
</organism>
<reference key="1">
    <citation type="journal article" date="2008" name="PLoS ONE">
        <title>Comparative analysis of Acinetobacters: three genomes for three lifestyles.</title>
        <authorList>
            <person name="Vallenet D."/>
            <person name="Nordmann P."/>
            <person name="Barbe V."/>
            <person name="Poirel L."/>
            <person name="Mangenot S."/>
            <person name="Bataille E."/>
            <person name="Dossat C."/>
            <person name="Gas S."/>
            <person name="Kreimeyer A."/>
            <person name="Lenoble P."/>
            <person name="Oztas S."/>
            <person name="Poulain J."/>
            <person name="Segurens B."/>
            <person name="Robert C."/>
            <person name="Abergel C."/>
            <person name="Claverie J.-M."/>
            <person name="Raoult D."/>
            <person name="Medigue C."/>
            <person name="Weissenbach J."/>
            <person name="Cruveiller S."/>
        </authorList>
    </citation>
    <scope>NUCLEOTIDE SEQUENCE [LARGE SCALE GENOMIC DNA]</scope>
    <source>
        <strain>SDF</strain>
    </source>
</reference>